<geneLocation type="chloroplast"/>
<dbReference type="EC" id="4.1.1.39" evidence="1"/>
<dbReference type="EMBL" id="L01911">
    <property type="protein sequence ID" value="AAA16240.2"/>
    <property type="molecule type" value="Genomic_DNA"/>
</dbReference>
<dbReference type="SMR" id="P28407"/>
<dbReference type="GO" id="GO:0009507">
    <property type="term" value="C:chloroplast"/>
    <property type="evidence" value="ECO:0007669"/>
    <property type="project" value="UniProtKB-SubCell"/>
</dbReference>
<dbReference type="GO" id="GO:0000287">
    <property type="term" value="F:magnesium ion binding"/>
    <property type="evidence" value="ECO:0007669"/>
    <property type="project" value="InterPro"/>
</dbReference>
<dbReference type="GO" id="GO:0004497">
    <property type="term" value="F:monooxygenase activity"/>
    <property type="evidence" value="ECO:0007669"/>
    <property type="project" value="UniProtKB-KW"/>
</dbReference>
<dbReference type="GO" id="GO:0016984">
    <property type="term" value="F:ribulose-bisphosphate carboxylase activity"/>
    <property type="evidence" value="ECO:0007669"/>
    <property type="project" value="UniProtKB-EC"/>
</dbReference>
<dbReference type="GO" id="GO:0009853">
    <property type="term" value="P:photorespiration"/>
    <property type="evidence" value="ECO:0007669"/>
    <property type="project" value="UniProtKB-KW"/>
</dbReference>
<dbReference type="GO" id="GO:0019253">
    <property type="term" value="P:reductive pentose-phosphate cycle"/>
    <property type="evidence" value="ECO:0007669"/>
    <property type="project" value="UniProtKB-KW"/>
</dbReference>
<dbReference type="CDD" id="cd08212">
    <property type="entry name" value="RuBisCO_large_I"/>
    <property type="match status" value="1"/>
</dbReference>
<dbReference type="FunFam" id="3.20.20.110:FF:000001">
    <property type="entry name" value="Ribulose bisphosphate carboxylase large chain"/>
    <property type="match status" value="1"/>
</dbReference>
<dbReference type="FunFam" id="3.30.70.150:FF:000001">
    <property type="entry name" value="Ribulose bisphosphate carboxylase large chain"/>
    <property type="match status" value="1"/>
</dbReference>
<dbReference type="Gene3D" id="3.20.20.110">
    <property type="entry name" value="Ribulose bisphosphate carboxylase, large subunit, C-terminal domain"/>
    <property type="match status" value="1"/>
</dbReference>
<dbReference type="Gene3D" id="3.30.70.150">
    <property type="entry name" value="RuBisCO large subunit, N-terminal domain"/>
    <property type="match status" value="1"/>
</dbReference>
<dbReference type="HAMAP" id="MF_01338">
    <property type="entry name" value="RuBisCO_L_type1"/>
    <property type="match status" value="1"/>
</dbReference>
<dbReference type="InterPro" id="IPR033966">
    <property type="entry name" value="RuBisCO"/>
</dbReference>
<dbReference type="InterPro" id="IPR020878">
    <property type="entry name" value="RuBisCo_large_chain_AS"/>
</dbReference>
<dbReference type="InterPro" id="IPR000685">
    <property type="entry name" value="RuBisCO_lsu_C"/>
</dbReference>
<dbReference type="InterPro" id="IPR036376">
    <property type="entry name" value="RuBisCO_lsu_C_sf"/>
</dbReference>
<dbReference type="InterPro" id="IPR017443">
    <property type="entry name" value="RuBisCO_lsu_fd_N"/>
</dbReference>
<dbReference type="InterPro" id="IPR036422">
    <property type="entry name" value="RuBisCO_lsu_N_sf"/>
</dbReference>
<dbReference type="InterPro" id="IPR020888">
    <property type="entry name" value="RuBisCO_lsuI"/>
</dbReference>
<dbReference type="NCBIfam" id="NF003252">
    <property type="entry name" value="PRK04208.1"/>
    <property type="match status" value="1"/>
</dbReference>
<dbReference type="PANTHER" id="PTHR42704">
    <property type="entry name" value="RIBULOSE BISPHOSPHATE CARBOXYLASE"/>
    <property type="match status" value="1"/>
</dbReference>
<dbReference type="PANTHER" id="PTHR42704:SF15">
    <property type="entry name" value="RIBULOSE BISPHOSPHATE CARBOXYLASE LARGE CHAIN"/>
    <property type="match status" value="1"/>
</dbReference>
<dbReference type="Pfam" id="PF00016">
    <property type="entry name" value="RuBisCO_large"/>
    <property type="match status" value="1"/>
</dbReference>
<dbReference type="Pfam" id="PF02788">
    <property type="entry name" value="RuBisCO_large_N"/>
    <property type="match status" value="1"/>
</dbReference>
<dbReference type="SFLD" id="SFLDG01052">
    <property type="entry name" value="RuBisCO"/>
    <property type="match status" value="1"/>
</dbReference>
<dbReference type="SFLD" id="SFLDS00014">
    <property type="entry name" value="RuBisCO"/>
    <property type="match status" value="1"/>
</dbReference>
<dbReference type="SFLD" id="SFLDG00301">
    <property type="entry name" value="RuBisCO-like_proteins"/>
    <property type="match status" value="1"/>
</dbReference>
<dbReference type="SUPFAM" id="SSF51649">
    <property type="entry name" value="RuBisCo, C-terminal domain"/>
    <property type="match status" value="1"/>
</dbReference>
<dbReference type="SUPFAM" id="SSF54966">
    <property type="entry name" value="RuBisCO, large subunit, small (N-terminal) domain"/>
    <property type="match status" value="1"/>
</dbReference>
<dbReference type="PROSITE" id="PS00157">
    <property type="entry name" value="RUBISCO_LARGE"/>
    <property type="match status" value="1"/>
</dbReference>
<keyword id="KW-0113">Calvin cycle</keyword>
<keyword id="KW-0120">Carbon dioxide fixation</keyword>
<keyword id="KW-0150">Chloroplast</keyword>
<keyword id="KW-1015">Disulfide bond</keyword>
<keyword id="KW-0456">Lyase</keyword>
<keyword id="KW-0460">Magnesium</keyword>
<keyword id="KW-0479">Metal-binding</keyword>
<keyword id="KW-0488">Methylation</keyword>
<keyword id="KW-0503">Monooxygenase</keyword>
<keyword id="KW-0560">Oxidoreductase</keyword>
<keyword id="KW-0601">Photorespiration</keyword>
<keyword id="KW-0602">Photosynthesis</keyword>
<keyword id="KW-0934">Plastid</keyword>
<name>RBL_DROFI</name>
<reference key="1">
    <citation type="journal article" date="1992" name="Science">
        <title>Carnivorous plants: phylogeny and structural evolution.</title>
        <authorList>
            <person name="Albert V.A."/>
            <person name="Williams S.E."/>
            <person name="Chase M.W."/>
        </authorList>
    </citation>
    <scope>NUCLEOTIDE SEQUENCE [GENOMIC DNA]</scope>
</reference>
<evidence type="ECO:0000255" key="1">
    <source>
        <dbReference type="HAMAP-Rule" id="MF_01338"/>
    </source>
</evidence>
<organism>
    <name type="scientific">Drosera filiformis</name>
    <name type="common">Thread-leaved sundew</name>
    <dbReference type="NCBI Taxonomy" id="4368"/>
    <lineage>
        <taxon>Eukaryota</taxon>
        <taxon>Viridiplantae</taxon>
        <taxon>Streptophyta</taxon>
        <taxon>Embryophyta</taxon>
        <taxon>Tracheophyta</taxon>
        <taxon>Spermatophyta</taxon>
        <taxon>Magnoliopsida</taxon>
        <taxon>eudicotyledons</taxon>
        <taxon>Gunneridae</taxon>
        <taxon>Pentapetalae</taxon>
        <taxon>Caryophyllales</taxon>
        <taxon>Droseraceae</taxon>
        <taxon>Drosera</taxon>
    </lineage>
</organism>
<sequence>GVGFKAGVKDYKLTYYTPEYQTLDTDILAAFRVTPQPGVPPEEAGAAVAAESSTGTWTTVWTDGLTSLDRYKGRCYHIEPVSGEENQFIAYVAYPLDLFEEGSVTNMFTSIVGNVFGFKALRALRLEDLRIPTSYIKTFQGPPHGIQVERDKLNKYGRPLLGCTIKPKLGLSAKNYGRAVYECLRGGLDFTKDDENVNSQPFMRWRDRFLFCAEALYKAQAETGEIKGHYLNATAGTCEEMIKRAVFARELGVPIVMHDYLTGGFTANTSLAHYCRDNGLLLHIHRAMHAVLDRQKNHGIHFRVLAKALRMSGGDHIHSGTVVGKLEGERDITLGFVDLLRDDFIEKDRSRGIYFTQPWVSLPGVLPVASGGIHVWHMPALTEIFGDDSVLQFGGGTLGHPWGNPPGAAANRVALEACVQARNQGQDLAREGNEIIRRAAKWSPELSSACEVWKEIKFIFEAMDTL</sequence>
<comment type="function">
    <text evidence="1">RuBisCO catalyzes two reactions: the carboxylation of D-ribulose 1,5-bisphosphate, the primary event in carbon dioxide fixation, as well as the oxidative fragmentation of the pentose substrate in the photorespiration process. Both reactions occur simultaneously and in competition at the same active site.</text>
</comment>
<comment type="catalytic activity">
    <reaction evidence="1">
        <text>2 (2R)-3-phosphoglycerate + 2 H(+) = D-ribulose 1,5-bisphosphate + CO2 + H2O</text>
        <dbReference type="Rhea" id="RHEA:23124"/>
        <dbReference type="ChEBI" id="CHEBI:15377"/>
        <dbReference type="ChEBI" id="CHEBI:15378"/>
        <dbReference type="ChEBI" id="CHEBI:16526"/>
        <dbReference type="ChEBI" id="CHEBI:57870"/>
        <dbReference type="ChEBI" id="CHEBI:58272"/>
        <dbReference type="EC" id="4.1.1.39"/>
    </reaction>
</comment>
<comment type="catalytic activity">
    <reaction evidence="1">
        <text>D-ribulose 1,5-bisphosphate + O2 = 2-phosphoglycolate + (2R)-3-phosphoglycerate + 2 H(+)</text>
        <dbReference type="Rhea" id="RHEA:36631"/>
        <dbReference type="ChEBI" id="CHEBI:15378"/>
        <dbReference type="ChEBI" id="CHEBI:15379"/>
        <dbReference type="ChEBI" id="CHEBI:57870"/>
        <dbReference type="ChEBI" id="CHEBI:58033"/>
        <dbReference type="ChEBI" id="CHEBI:58272"/>
    </reaction>
</comment>
<comment type="cofactor">
    <cofactor evidence="1">
        <name>Mg(2+)</name>
        <dbReference type="ChEBI" id="CHEBI:18420"/>
    </cofactor>
    <text evidence="1">Binds 1 Mg(2+) ion per subunit.</text>
</comment>
<comment type="subunit">
    <text evidence="1">Heterohexadecamer of 8 large chains and 8 small chains; disulfide-linked. The disulfide link is formed within the large subunit homodimers.</text>
</comment>
<comment type="subcellular location">
    <subcellularLocation>
        <location>Plastid</location>
        <location>Chloroplast</location>
    </subcellularLocation>
</comment>
<comment type="PTM">
    <text evidence="1">The disulfide bond which can form in the large chain dimeric partners within the hexadecamer appears to be associated with oxidative stress and protein turnover.</text>
</comment>
<comment type="miscellaneous">
    <text evidence="1">The basic functional RuBisCO is composed of a large chain homodimer in a 'head-to-tail' conformation. In form I RuBisCO this homodimer is arranged in a barrel-like tetramer with the small subunits forming a tetrameric 'cap' on each end of the 'barrel'.</text>
</comment>
<comment type="similarity">
    <text evidence="1">Belongs to the RuBisCO large chain family. Type I subfamily.</text>
</comment>
<accession>P28407</accession>
<feature type="chain" id="PRO_0000062450" description="Ribulose bisphosphate carboxylase large chain">
    <location>
        <begin position="1" status="less than"/>
        <end position="466"/>
    </location>
</feature>
<feature type="active site" description="Proton acceptor" evidence="1">
    <location>
        <position position="166"/>
    </location>
</feature>
<feature type="active site" description="Proton acceptor" evidence="1">
    <location>
        <position position="285"/>
    </location>
</feature>
<feature type="binding site" description="in homodimeric partner" evidence="1">
    <location>
        <position position="114"/>
    </location>
    <ligand>
        <name>substrate</name>
    </ligand>
</feature>
<feature type="binding site" evidence="1">
    <location>
        <position position="164"/>
    </location>
    <ligand>
        <name>substrate</name>
    </ligand>
</feature>
<feature type="binding site" evidence="1">
    <location>
        <position position="168"/>
    </location>
    <ligand>
        <name>substrate</name>
    </ligand>
</feature>
<feature type="binding site" description="via carbamate group" evidence="1">
    <location>
        <position position="192"/>
    </location>
    <ligand>
        <name>Mg(2+)</name>
        <dbReference type="ChEBI" id="CHEBI:18420"/>
    </ligand>
</feature>
<feature type="binding site" evidence="1">
    <location>
        <position position="194"/>
    </location>
    <ligand>
        <name>Mg(2+)</name>
        <dbReference type="ChEBI" id="CHEBI:18420"/>
    </ligand>
</feature>
<feature type="binding site" evidence="1">
    <location>
        <position position="195"/>
    </location>
    <ligand>
        <name>Mg(2+)</name>
        <dbReference type="ChEBI" id="CHEBI:18420"/>
    </ligand>
</feature>
<feature type="binding site" evidence="1">
    <location>
        <position position="286"/>
    </location>
    <ligand>
        <name>substrate</name>
    </ligand>
</feature>
<feature type="binding site" evidence="1">
    <location>
        <position position="318"/>
    </location>
    <ligand>
        <name>substrate</name>
    </ligand>
</feature>
<feature type="binding site" evidence="1">
    <location>
        <position position="370"/>
    </location>
    <ligand>
        <name>substrate</name>
    </ligand>
</feature>
<feature type="site" description="Transition state stabilizer" evidence="1">
    <location>
        <position position="325"/>
    </location>
</feature>
<feature type="modified residue" description="N6,N6,N6-trimethyllysine" evidence="1">
    <location>
        <position position="5"/>
    </location>
</feature>
<feature type="modified residue" description="N6-carboxylysine" evidence="1">
    <location>
        <position position="192"/>
    </location>
</feature>
<feature type="disulfide bond" description="Interchain; in linked form" evidence="1">
    <location>
        <position position="238"/>
    </location>
</feature>
<feature type="non-terminal residue">
    <location>
        <position position="1"/>
    </location>
</feature>
<protein>
    <recommendedName>
        <fullName evidence="1">Ribulose bisphosphate carboxylase large chain</fullName>
        <shortName evidence="1">RuBisCO large subunit</shortName>
        <ecNumber evidence="1">4.1.1.39</ecNumber>
    </recommendedName>
</protein>
<proteinExistence type="inferred from homology"/>
<gene>
    <name evidence="1" type="primary">rbcL</name>
</gene>